<proteinExistence type="inferred from homology"/>
<dbReference type="EC" id="2.7.7.6" evidence="1"/>
<dbReference type="EMBL" id="CU207211">
    <property type="protein sequence ID" value="CAL63282.1"/>
    <property type="molecule type" value="Genomic_DNA"/>
</dbReference>
<dbReference type="SMR" id="A4G9U5"/>
<dbReference type="STRING" id="204773.HEAR3173"/>
<dbReference type="KEGG" id="har:HEAR3173"/>
<dbReference type="eggNOG" id="COG0085">
    <property type="taxonomic scope" value="Bacteria"/>
</dbReference>
<dbReference type="HOGENOM" id="CLU_000524_4_0_4"/>
<dbReference type="OrthoDB" id="9803954at2"/>
<dbReference type="Proteomes" id="UP000006697">
    <property type="component" value="Chromosome"/>
</dbReference>
<dbReference type="GO" id="GO:0000428">
    <property type="term" value="C:DNA-directed RNA polymerase complex"/>
    <property type="evidence" value="ECO:0007669"/>
    <property type="project" value="UniProtKB-KW"/>
</dbReference>
<dbReference type="GO" id="GO:0003677">
    <property type="term" value="F:DNA binding"/>
    <property type="evidence" value="ECO:0007669"/>
    <property type="project" value="UniProtKB-UniRule"/>
</dbReference>
<dbReference type="GO" id="GO:0003899">
    <property type="term" value="F:DNA-directed RNA polymerase activity"/>
    <property type="evidence" value="ECO:0007669"/>
    <property type="project" value="UniProtKB-UniRule"/>
</dbReference>
<dbReference type="GO" id="GO:0032549">
    <property type="term" value="F:ribonucleoside binding"/>
    <property type="evidence" value="ECO:0007669"/>
    <property type="project" value="InterPro"/>
</dbReference>
<dbReference type="GO" id="GO:0006351">
    <property type="term" value="P:DNA-templated transcription"/>
    <property type="evidence" value="ECO:0007669"/>
    <property type="project" value="UniProtKB-UniRule"/>
</dbReference>
<dbReference type="CDD" id="cd00653">
    <property type="entry name" value="RNA_pol_B_RPB2"/>
    <property type="match status" value="1"/>
</dbReference>
<dbReference type="FunFam" id="2.40.50.100:FF:000006">
    <property type="entry name" value="DNA-directed RNA polymerase subunit beta"/>
    <property type="match status" value="1"/>
</dbReference>
<dbReference type="FunFam" id="2.40.50.150:FF:000001">
    <property type="entry name" value="DNA-directed RNA polymerase subunit beta"/>
    <property type="match status" value="1"/>
</dbReference>
<dbReference type="FunFam" id="3.90.1800.10:FF:000001">
    <property type="entry name" value="DNA-directed RNA polymerase subunit beta"/>
    <property type="match status" value="1"/>
</dbReference>
<dbReference type="Gene3D" id="2.40.50.100">
    <property type="match status" value="1"/>
</dbReference>
<dbReference type="Gene3D" id="2.40.50.150">
    <property type="match status" value="1"/>
</dbReference>
<dbReference type="Gene3D" id="3.90.1100.10">
    <property type="match status" value="2"/>
</dbReference>
<dbReference type="Gene3D" id="2.30.150.10">
    <property type="entry name" value="DNA-directed RNA polymerase, beta subunit, external 1 domain"/>
    <property type="match status" value="1"/>
</dbReference>
<dbReference type="Gene3D" id="2.40.270.10">
    <property type="entry name" value="DNA-directed RNA polymerase, subunit 2, domain 6"/>
    <property type="match status" value="1"/>
</dbReference>
<dbReference type="Gene3D" id="3.90.1800.10">
    <property type="entry name" value="RNA polymerase alpha subunit dimerisation domain"/>
    <property type="match status" value="1"/>
</dbReference>
<dbReference type="Gene3D" id="3.90.1110.10">
    <property type="entry name" value="RNA polymerase Rpb2, domain 2"/>
    <property type="match status" value="1"/>
</dbReference>
<dbReference type="HAMAP" id="MF_01321">
    <property type="entry name" value="RNApol_bact_RpoB"/>
    <property type="match status" value="1"/>
</dbReference>
<dbReference type="InterPro" id="IPR042107">
    <property type="entry name" value="DNA-dir_RNA_pol_bsu_ext_1_sf"/>
</dbReference>
<dbReference type="InterPro" id="IPR019462">
    <property type="entry name" value="DNA-dir_RNA_pol_bsu_external_1"/>
</dbReference>
<dbReference type="InterPro" id="IPR015712">
    <property type="entry name" value="DNA-dir_RNA_pol_su2"/>
</dbReference>
<dbReference type="InterPro" id="IPR007120">
    <property type="entry name" value="DNA-dir_RNAP_su2_dom"/>
</dbReference>
<dbReference type="InterPro" id="IPR037033">
    <property type="entry name" value="DNA-dir_RNAP_su2_hyb_sf"/>
</dbReference>
<dbReference type="InterPro" id="IPR010243">
    <property type="entry name" value="RNA_pol_bsu_bac"/>
</dbReference>
<dbReference type="InterPro" id="IPR007121">
    <property type="entry name" value="RNA_pol_bsu_CS"/>
</dbReference>
<dbReference type="InterPro" id="IPR007644">
    <property type="entry name" value="RNA_pol_bsu_protrusion"/>
</dbReference>
<dbReference type="InterPro" id="IPR007642">
    <property type="entry name" value="RNA_pol_Rpb2_2"/>
</dbReference>
<dbReference type="InterPro" id="IPR037034">
    <property type="entry name" value="RNA_pol_Rpb2_2_sf"/>
</dbReference>
<dbReference type="InterPro" id="IPR007645">
    <property type="entry name" value="RNA_pol_Rpb2_3"/>
</dbReference>
<dbReference type="InterPro" id="IPR007641">
    <property type="entry name" value="RNA_pol_Rpb2_7"/>
</dbReference>
<dbReference type="InterPro" id="IPR014724">
    <property type="entry name" value="RNA_pol_RPB2_OB-fold"/>
</dbReference>
<dbReference type="NCBIfam" id="NF001616">
    <property type="entry name" value="PRK00405.1"/>
    <property type="match status" value="1"/>
</dbReference>
<dbReference type="NCBIfam" id="TIGR02013">
    <property type="entry name" value="rpoB"/>
    <property type="match status" value="1"/>
</dbReference>
<dbReference type="PANTHER" id="PTHR20856">
    <property type="entry name" value="DNA-DIRECTED RNA POLYMERASE I SUBUNIT 2"/>
    <property type="match status" value="1"/>
</dbReference>
<dbReference type="Pfam" id="PF04563">
    <property type="entry name" value="RNA_pol_Rpb2_1"/>
    <property type="match status" value="1"/>
</dbReference>
<dbReference type="Pfam" id="PF04561">
    <property type="entry name" value="RNA_pol_Rpb2_2"/>
    <property type="match status" value="2"/>
</dbReference>
<dbReference type="Pfam" id="PF04565">
    <property type="entry name" value="RNA_pol_Rpb2_3"/>
    <property type="match status" value="1"/>
</dbReference>
<dbReference type="Pfam" id="PF10385">
    <property type="entry name" value="RNA_pol_Rpb2_45"/>
    <property type="match status" value="1"/>
</dbReference>
<dbReference type="Pfam" id="PF00562">
    <property type="entry name" value="RNA_pol_Rpb2_6"/>
    <property type="match status" value="1"/>
</dbReference>
<dbReference type="Pfam" id="PF04560">
    <property type="entry name" value="RNA_pol_Rpb2_7"/>
    <property type="match status" value="1"/>
</dbReference>
<dbReference type="SUPFAM" id="SSF64484">
    <property type="entry name" value="beta and beta-prime subunits of DNA dependent RNA-polymerase"/>
    <property type="match status" value="1"/>
</dbReference>
<dbReference type="PROSITE" id="PS01166">
    <property type="entry name" value="RNA_POL_BETA"/>
    <property type="match status" value="1"/>
</dbReference>
<gene>
    <name evidence="1" type="primary">rpoB</name>
    <name type="ordered locus">HEAR3173</name>
</gene>
<protein>
    <recommendedName>
        <fullName evidence="1">DNA-directed RNA polymerase subunit beta</fullName>
        <shortName evidence="1">RNAP subunit beta</shortName>
        <ecNumber evidence="1">2.7.7.6</ecNumber>
    </recommendedName>
    <alternativeName>
        <fullName evidence="1">RNA polymerase subunit beta</fullName>
    </alternativeName>
    <alternativeName>
        <fullName evidence="1">Transcriptase subunit beta</fullName>
    </alternativeName>
</protein>
<organism>
    <name type="scientific">Herminiimonas arsenicoxydans</name>
    <dbReference type="NCBI Taxonomy" id="204773"/>
    <lineage>
        <taxon>Bacteria</taxon>
        <taxon>Pseudomonadati</taxon>
        <taxon>Pseudomonadota</taxon>
        <taxon>Betaproteobacteria</taxon>
        <taxon>Burkholderiales</taxon>
        <taxon>Oxalobacteraceae</taxon>
        <taxon>Herminiimonas</taxon>
    </lineage>
</organism>
<reference key="1">
    <citation type="journal article" date="2007" name="PLoS Genet.">
        <title>A tale of two oxidation states: bacterial colonization of arsenic-rich environments.</title>
        <authorList>
            <person name="Muller D."/>
            <person name="Medigue C."/>
            <person name="Koechler S."/>
            <person name="Barbe V."/>
            <person name="Barakat M."/>
            <person name="Talla E."/>
            <person name="Bonnefoy V."/>
            <person name="Krin E."/>
            <person name="Arsene-Ploetze F."/>
            <person name="Carapito C."/>
            <person name="Chandler M."/>
            <person name="Cournoyer B."/>
            <person name="Cruveiller S."/>
            <person name="Dossat C."/>
            <person name="Duval S."/>
            <person name="Heymann M."/>
            <person name="Leize E."/>
            <person name="Lieutaud A."/>
            <person name="Lievremont D."/>
            <person name="Makita Y."/>
            <person name="Mangenot S."/>
            <person name="Nitschke W."/>
            <person name="Ortet P."/>
            <person name="Perdrial N."/>
            <person name="Schoepp B."/>
            <person name="Siguier P."/>
            <person name="Simeonova D.D."/>
            <person name="Rouy Z."/>
            <person name="Segurens B."/>
            <person name="Turlin E."/>
            <person name="Vallenet D."/>
            <person name="van Dorsselaer A."/>
            <person name="Weiss S."/>
            <person name="Weissenbach J."/>
            <person name="Lett M.-C."/>
            <person name="Danchin A."/>
            <person name="Bertin P.N."/>
        </authorList>
    </citation>
    <scope>NUCLEOTIDE SEQUENCE [LARGE SCALE GENOMIC DNA]</scope>
    <source>
        <strain>ULPAs1</strain>
    </source>
</reference>
<comment type="function">
    <text evidence="1">DNA-dependent RNA polymerase catalyzes the transcription of DNA into RNA using the four ribonucleoside triphosphates as substrates.</text>
</comment>
<comment type="catalytic activity">
    <reaction evidence="1">
        <text>RNA(n) + a ribonucleoside 5'-triphosphate = RNA(n+1) + diphosphate</text>
        <dbReference type="Rhea" id="RHEA:21248"/>
        <dbReference type="Rhea" id="RHEA-COMP:14527"/>
        <dbReference type="Rhea" id="RHEA-COMP:17342"/>
        <dbReference type="ChEBI" id="CHEBI:33019"/>
        <dbReference type="ChEBI" id="CHEBI:61557"/>
        <dbReference type="ChEBI" id="CHEBI:140395"/>
        <dbReference type="EC" id="2.7.7.6"/>
    </reaction>
</comment>
<comment type="subunit">
    <text evidence="1">The RNAP catalytic core consists of 2 alpha, 1 beta, 1 beta' and 1 omega subunit. When a sigma factor is associated with the core the holoenzyme is formed, which can initiate transcription.</text>
</comment>
<comment type="similarity">
    <text evidence="1">Belongs to the RNA polymerase beta chain family.</text>
</comment>
<name>RPOB_HERAR</name>
<keyword id="KW-0240">DNA-directed RNA polymerase</keyword>
<keyword id="KW-0548">Nucleotidyltransferase</keyword>
<keyword id="KW-1185">Reference proteome</keyword>
<keyword id="KW-0804">Transcription</keyword>
<keyword id="KW-0808">Transferase</keyword>
<sequence length="1368" mass="152432">MHYSFTEKKRIRKSFAKRANVHNVPFLLATQLESYHDFLQEDKIPSQRKNEGLQSAFTSIFPIVSHNGFARLEFLSYVLGDPPFNIKECQQRGLTYASPLRAKVRLVILDKESPTKPVVKEMKEQEVYMGELPLMTSTGSFVINGTERVIVSQLHRSPGVFFEHDRGKTHSSGKLLFSARIIPYRGSWLDYEFDPKDILFFRVDRRRKMPVTILLKAIGMTPEQILENFFVFDDFTLHADGAEMKFVAERLRGEVARFDITDKAGKVLVAKDKRINSKHVRDVEAAGIKQISVPEDYLLGRILAKNIVDADTGEVIASANDELTDDLLARLREGKISHIQTLYTNDLDQGGYISQTLRMDDTNDQMAAKVAIYRMMRPGEPPTEDSVEALFNGLFYNPDRYDLSAVGRMKFNRRIGRDSLTGDMTLSNEDVLAVIKILVELRNGRGEVDDIDHLGNRRVRCVGELAENQFRAGLVRVERAVKERLGQAEADNLMPHDLINSKPISAAIREFFGSSQLSQFMDQTNPLSEITHKRRVSALGPGGLTRERAGFEVRDVHPTHYGRVCPIETPEGPNIGLINSLALYARLNEYGFLETPYRKVEGSKVTDQIDYLSAIEEGRYIIAQANATIDKAGMLSDELVSAREAGETILVSPERVQYMDVAPGQVVSVAASLIPFLEHDDANRALMGANMQRQAVPCLRPEKALVGTGIERTVAVDSGTTVQALRGGIVDYIDAGRVVIRVNDDEAQAGEVGVDIYNLIKYTRSNQNTNINQRPIVQVGDRVAKHDVIADGASTDLGELALGQNMLVAFMPWNGYNFEDSILISEKVVADDRYTSIHIEELSVVARDTKLGAEEITRDISNLAENQLARLDESGIVYIGAEVTAGDTLVGKVTPKGETQLTPEEKLLRAIFGEKASDVKDTSLRVPSGMVGTVIDVQVFTREGIPRDKRAQQIIDDELQRYRLDLNDQLRIVEGDAFQRLEKMLVGKVVNGGPKKIAKGTKITAEYLADLDKYHWFDIRPSDDTSANALEAIKESIAEKRHQFDLAFEEKRKKLTQGDELPPGVQKMVKVYLAVKRRLQPGDKMAGRHGNKGVVSRILPIEDMPHMADGTPADVVLNPLGVPSRMNVGQVLEVHLGWAAKGLGLRIGEMLNTQVQIAELRKFLAAIYNESGKTEDLDSFSDAEILELASNLKNGVPFATPVFDGADEGETRRMLDLAYPDHIAKQLGMTASKNQVTMYDGRTGEAFERTVTVGYMHYLKLHHLVDDKMHARSTGPYSLVTQQPLGGKAQFGGQRFGEMEVWALEAYGASYVLQEMLTVKSDDVNGRTKVYENLVKGDHVIDAGMPESFNVLVKEIRSLGIDIDLERD</sequence>
<feature type="chain" id="PRO_0000300326" description="DNA-directed RNA polymerase subunit beta">
    <location>
        <begin position="1"/>
        <end position="1368"/>
    </location>
</feature>
<accession>A4G9U5</accession>
<evidence type="ECO:0000255" key="1">
    <source>
        <dbReference type="HAMAP-Rule" id="MF_01321"/>
    </source>
</evidence>